<sequence length="426" mass="45975">MDQNIIINILRKEMMPGLGVTEPASIALSSAKAYEVIGGEIKNIKIIADPGLFKNAFSCAIPGTKEVGNEMAALLGAICGDASLGLECLRKIKKEDVSKAKTMLDKIHIEIKSQTEGLYVESIVTTNNGIGRTIIRYKHDNIVLVEKNNKILYQKENTLNKSNNFSQEAIDSKKITEMKLDEIVEFVNNVNYEKIEFLLESIKMNKKLSEKGLEGLGIGLGKLILESCNENNYELYAEALTCSAIDARVSGAAVPAMTVTGSGNHGIIATLPLLAIKEKKNLNNEMLARSIALSYIINIYIKEFSGKLSAFCGCAVAAGTGVSAGICYLLGGRLKEIENTIKNMASNITGMICTGGNLACSLKANTGVKAAFLSAKMALKNIVIPNKCGIVSNSIEDTMKNIGRIAYPGMMQTDKEILNIMIESSK</sequence>
<gene>
    <name type="ordered locus">CLI_1810</name>
</gene>
<organism>
    <name type="scientific">Clostridium botulinum (strain Langeland / NCTC 10281 / Type F)</name>
    <dbReference type="NCBI Taxonomy" id="441772"/>
    <lineage>
        <taxon>Bacteria</taxon>
        <taxon>Bacillati</taxon>
        <taxon>Bacillota</taxon>
        <taxon>Clostridia</taxon>
        <taxon>Eubacteriales</taxon>
        <taxon>Clostridiaceae</taxon>
        <taxon>Clostridium</taxon>
    </lineage>
</organism>
<evidence type="ECO:0000255" key="1">
    <source>
        <dbReference type="HAMAP-Rule" id="MF_01845"/>
    </source>
</evidence>
<protein>
    <recommendedName>
        <fullName evidence="1">UPF0597 protein CLI_1810</fullName>
    </recommendedName>
</protein>
<comment type="similarity">
    <text evidence="1">Belongs to the UPF0597 family.</text>
</comment>
<name>Y1810_CLOBL</name>
<dbReference type="EMBL" id="CP000728">
    <property type="protein sequence ID" value="ABS41473.1"/>
    <property type="molecule type" value="Genomic_DNA"/>
</dbReference>
<dbReference type="RefSeq" id="WP_012099802.1">
    <property type="nucleotide sequence ID" value="NC_009699.1"/>
</dbReference>
<dbReference type="SMR" id="A7GE60"/>
<dbReference type="KEGG" id="cbf:CLI_1810"/>
<dbReference type="HOGENOM" id="CLU_051840_0_0_9"/>
<dbReference type="Proteomes" id="UP000002410">
    <property type="component" value="Chromosome"/>
</dbReference>
<dbReference type="GO" id="GO:0080146">
    <property type="term" value="F:L-cysteine desulfhydrase activity"/>
    <property type="evidence" value="ECO:0007669"/>
    <property type="project" value="TreeGrafter"/>
</dbReference>
<dbReference type="GO" id="GO:0019450">
    <property type="term" value="P:L-cysteine catabolic process to pyruvate"/>
    <property type="evidence" value="ECO:0007669"/>
    <property type="project" value="TreeGrafter"/>
</dbReference>
<dbReference type="HAMAP" id="MF_01845">
    <property type="entry name" value="UPF0597"/>
    <property type="match status" value="1"/>
</dbReference>
<dbReference type="InterPro" id="IPR005130">
    <property type="entry name" value="Ser_deHydtase-like_asu"/>
</dbReference>
<dbReference type="InterPro" id="IPR021144">
    <property type="entry name" value="UPF0597"/>
</dbReference>
<dbReference type="PANTHER" id="PTHR30501">
    <property type="entry name" value="UPF0597 PROTEIN YHAM"/>
    <property type="match status" value="1"/>
</dbReference>
<dbReference type="PANTHER" id="PTHR30501:SF2">
    <property type="entry name" value="UPF0597 PROTEIN YHAM"/>
    <property type="match status" value="1"/>
</dbReference>
<dbReference type="Pfam" id="PF03313">
    <property type="entry name" value="SDH_alpha"/>
    <property type="match status" value="1"/>
</dbReference>
<dbReference type="PIRSF" id="PIRSF006054">
    <property type="entry name" value="UCP006054"/>
    <property type="match status" value="1"/>
</dbReference>
<feature type="chain" id="PRO_0000339799" description="UPF0597 protein CLI_1810">
    <location>
        <begin position="1"/>
        <end position="426"/>
    </location>
</feature>
<reference key="1">
    <citation type="submission" date="2007-06" db="EMBL/GenBank/DDBJ databases">
        <authorList>
            <person name="Brinkac L.M."/>
            <person name="Daugherty S."/>
            <person name="Dodson R.J."/>
            <person name="Madupu R."/>
            <person name="Brown J.L."/>
            <person name="Bruce D."/>
            <person name="Detter C."/>
            <person name="Munk C."/>
            <person name="Smith L.A."/>
            <person name="Smith T.J."/>
            <person name="White O."/>
            <person name="Brettin T.S."/>
        </authorList>
    </citation>
    <scope>NUCLEOTIDE SEQUENCE [LARGE SCALE GENOMIC DNA]</scope>
    <source>
        <strain>Langeland / NCTC 10281 / Type F</strain>
    </source>
</reference>
<proteinExistence type="inferred from homology"/>
<accession>A7GE60</accession>